<gene>
    <name type="primary">szrd1</name>
</gene>
<feature type="chain" id="PRO_0000303074" description="SUZ RNA-binding domain-containing">
    <location>
        <begin position="1"/>
        <end position="152"/>
    </location>
</feature>
<feature type="domain" description="SUZ" evidence="1">
    <location>
        <begin position="42"/>
        <end position="107"/>
    </location>
</feature>
<feature type="domain" description="SUZ-C" evidence="2">
    <location>
        <begin position="111"/>
        <end position="152"/>
    </location>
</feature>
<feature type="region of interest" description="Disordered" evidence="3">
    <location>
        <begin position="28"/>
        <end position="152"/>
    </location>
</feature>
<feature type="compositionally biased region" description="Basic and acidic residues" evidence="3">
    <location>
        <begin position="89"/>
        <end position="100"/>
    </location>
</feature>
<feature type="compositionally biased region" description="Basic and acidic residues" evidence="3">
    <location>
        <begin position="113"/>
        <end position="130"/>
    </location>
</feature>
<evidence type="ECO:0000255" key="1">
    <source>
        <dbReference type="PROSITE-ProRule" id="PRU01009"/>
    </source>
</evidence>
<evidence type="ECO:0000255" key="2">
    <source>
        <dbReference type="PROSITE-ProRule" id="PRU01287"/>
    </source>
</evidence>
<evidence type="ECO:0000256" key="3">
    <source>
        <dbReference type="SAM" id="MobiDB-lite"/>
    </source>
</evidence>
<evidence type="ECO:0000305" key="4"/>
<accession>Q6GR00</accession>
<keyword id="KW-1185">Reference proteome</keyword>
<protein>
    <recommendedName>
        <fullName>SUZ RNA-binding domain-containing</fullName>
        <shortName>SUZ domain-containing protein 1</shortName>
    </recommendedName>
</protein>
<proteinExistence type="evidence at transcript level"/>
<organism>
    <name type="scientific">Xenopus laevis</name>
    <name type="common">African clawed frog</name>
    <dbReference type="NCBI Taxonomy" id="8355"/>
    <lineage>
        <taxon>Eukaryota</taxon>
        <taxon>Metazoa</taxon>
        <taxon>Chordata</taxon>
        <taxon>Craniata</taxon>
        <taxon>Vertebrata</taxon>
        <taxon>Euteleostomi</taxon>
        <taxon>Amphibia</taxon>
        <taxon>Batrachia</taxon>
        <taxon>Anura</taxon>
        <taxon>Pipoidea</taxon>
        <taxon>Pipidae</taxon>
        <taxon>Xenopodinae</taxon>
        <taxon>Xenopus</taxon>
        <taxon>Xenopus</taxon>
    </lineage>
</organism>
<name>SZRD1_XENLA</name>
<reference key="1">
    <citation type="submission" date="2004-05" db="EMBL/GenBank/DDBJ databases">
        <authorList>
            <consortium name="NIH - Xenopus Gene Collection (XGC) project"/>
        </authorList>
    </citation>
    <scope>NUCLEOTIDE SEQUENCE [LARGE SCALE MRNA]</scope>
    <source>
        <tissue>Kidney</tissue>
    </source>
</reference>
<comment type="similarity">
    <text evidence="4">Belongs to the SZRD1 family.</text>
</comment>
<dbReference type="EMBL" id="BC071137">
    <property type="protein sequence ID" value="AAH71137.1"/>
    <property type="molecule type" value="mRNA"/>
</dbReference>
<dbReference type="RefSeq" id="NP_001085367.1">
    <property type="nucleotide sequence ID" value="NM_001091898.1"/>
</dbReference>
<dbReference type="SMR" id="Q6GR00"/>
<dbReference type="DNASU" id="443793"/>
<dbReference type="GeneID" id="443793"/>
<dbReference type="KEGG" id="xla:443793"/>
<dbReference type="AGR" id="Xenbase:XB-GENE-6078952"/>
<dbReference type="CTD" id="443793"/>
<dbReference type="Xenbase" id="XB-GENE-6078952">
    <property type="gene designation" value="szrd1.L"/>
</dbReference>
<dbReference type="OrthoDB" id="5373615at2759"/>
<dbReference type="Proteomes" id="UP000186698">
    <property type="component" value="Chromosome 7L"/>
</dbReference>
<dbReference type="Bgee" id="443793">
    <property type="expression patterns" value="Expressed in oocyte and 19 other cell types or tissues"/>
</dbReference>
<dbReference type="InterPro" id="IPR024771">
    <property type="entry name" value="SUZ"/>
</dbReference>
<dbReference type="InterPro" id="IPR024642">
    <property type="entry name" value="SUZ-C"/>
</dbReference>
<dbReference type="InterPro" id="IPR039228">
    <property type="entry name" value="SZRD1"/>
</dbReference>
<dbReference type="PANTHER" id="PTHR31796">
    <property type="entry name" value="SUZ DOMAIN-CONTAINING PROTEIN 1"/>
    <property type="match status" value="1"/>
</dbReference>
<dbReference type="PANTHER" id="PTHR31796:SF2">
    <property type="entry name" value="SUZ DOMAIN-CONTAINING PROTEIN 1"/>
    <property type="match status" value="1"/>
</dbReference>
<dbReference type="Pfam" id="PF12752">
    <property type="entry name" value="SUZ"/>
    <property type="match status" value="1"/>
</dbReference>
<dbReference type="Pfam" id="PF12901">
    <property type="entry name" value="SUZ-C"/>
    <property type="match status" value="1"/>
</dbReference>
<dbReference type="PROSITE" id="PS51673">
    <property type="entry name" value="SUZ"/>
    <property type="match status" value="1"/>
</dbReference>
<dbReference type="PROSITE" id="PS51938">
    <property type="entry name" value="SUZ_C"/>
    <property type="match status" value="1"/>
</dbReference>
<sequence>MEEDEVAESWEEAADSGEIERRLEKKLKISQRENNNTKSPPRAPVVIQDDSLPSGPPPQIRILKRPTSNGLASSPHACSRPAAPVKSLAQREAEYAEARKRILGSASPEEEQEKPVAERPARINQVEEIRQQNNVIRQPLGPDGSQGFRQGR</sequence>